<name>SASA_PROMA</name>
<evidence type="ECO:0000255" key="1">
    <source>
        <dbReference type="HAMAP-Rule" id="MF_01837"/>
    </source>
</evidence>
<reference key="1">
    <citation type="thesis" date="1999" institute="Humboldt-University Berlin" country="Germany">
        <authorList>
            <person name="Strehl B."/>
        </authorList>
    </citation>
    <scope>NUCLEOTIDE SEQUENCE [GENOMIC DNA]</scope>
</reference>
<reference key="2">
    <citation type="journal article" date="2003" name="Proc. Natl. Acad. Sci. U.S.A.">
        <title>Genome sequence of the cyanobacterium Prochlorococcus marinus SS120, a nearly minimal oxyphototrophic genome.</title>
        <authorList>
            <person name="Dufresne A."/>
            <person name="Salanoubat M."/>
            <person name="Partensky F."/>
            <person name="Artiguenave F."/>
            <person name="Axmann I.M."/>
            <person name="Barbe V."/>
            <person name="Duprat S."/>
            <person name="Galperin M.Y."/>
            <person name="Koonin E.V."/>
            <person name="Le Gall F."/>
            <person name="Makarova K.S."/>
            <person name="Ostrowski M."/>
            <person name="Oztas S."/>
            <person name="Robert C."/>
            <person name="Rogozin I.B."/>
            <person name="Scanlan D.J."/>
            <person name="Tandeau de Marsac N."/>
            <person name="Weissenbach J."/>
            <person name="Wincker P."/>
            <person name="Wolf Y.I."/>
            <person name="Hess W.R."/>
        </authorList>
    </citation>
    <scope>NUCLEOTIDE SEQUENCE [LARGE SCALE GENOMIC DNA]</scope>
    <source>
        <strain>SARG / CCMP1375 / SS120</strain>
    </source>
</reference>
<gene>
    <name evidence="1" type="primary">sasA</name>
    <name type="ordered locus">Pro_1121</name>
</gene>
<sequence length="381" mass="43372">MNKATANERKKLRLLLVASRKHLSRGDLRSLIRFLESEDCGFEIKLQFSDPKEQPELLELHRLVAIPALIKLDPQPKQIFAGTSILEQLKNWLPRWEQEDILISSGLGINLRQKESENGRTRNELLLEDENLVLRQENETLSNQIESQERLLRMVAHELRTPLSAAKLALQSQALGQIDLIKLQEVVKRRLEEIESLSKDLLEVGTTRWEALFNPQEANLANIAAEVILELEKFWLSRGIGINTDIPADLPNVFADQSRMKQVLLNLIENALKFSNDGDTVEITMLHRTNQWVQISVSDKGPGIPEEEQQRIFLDRVRLPQTSNETSGFGIGLSVCRRIVEVHGGKIWVVSQPGEGSCFYFTVPVWDKRNKSLEPLTLTQG</sequence>
<dbReference type="EC" id="2.7.13.3" evidence="1"/>
<dbReference type="EMBL" id="AJ251303">
    <property type="protein sequence ID" value="CAB61760.1"/>
    <property type="molecule type" value="Genomic_DNA"/>
</dbReference>
<dbReference type="EMBL" id="AE017126">
    <property type="protein sequence ID" value="AAQ00166.1"/>
    <property type="molecule type" value="Genomic_DNA"/>
</dbReference>
<dbReference type="RefSeq" id="NP_875513.1">
    <property type="nucleotide sequence ID" value="NC_005042.1"/>
</dbReference>
<dbReference type="RefSeq" id="WP_011125273.1">
    <property type="nucleotide sequence ID" value="NC_005042.1"/>
</dbReference>
<dbReference type="SMR" id="Q7BWI3"/>
<dbReference type="STRING" id="167539.Pro_1121"/>
<dbReference type="EnsemblBacteria" id="AAQ00166">
    <property type="protein sequence ID" value="AAQ00166"/>
    <property type="gene ID" value="Pro_1121"/>
</dbReference>
<dbReference type="KEGG" id="pma:Pro_1121"/>
<dbReference type="PATRIC" id="fig|167539.5.peg.1173"/>
<dbReference type="eggNOG" id="COG2205">
    <property type="taxonomic scope" value="Bacteria"/>
</dbReference>
<dbReference type="HOGENOM" id="CLU_723030_0_0_3"/>
<dbReference type="OrthoDB" id="9773956at2"/>
<dbReference type="Proteomes" id="UP000001420">
    <property type="component" value="Chromosome"/>
</dbReference>
<dbReference type="GO" id="GO:0005886">
    <property type="term" value="C:plasma membrane"/>
    <property type="evidence" value="ECO:0007669"/>
    <property type="project" value="TreeGrafter"/>
</dbReference>
<dbReference type="GO" id="GO:0005524">
    <property type="term" value="F:ATP binding"/>
    <property type="evidence" value="ECO:0007669"/>
    <property type="project" value="UniProtKB-KW"/>
</dbReference>
<dbReference type="GO" id="GO:0009927">
    <property type="term" value="F:histidine phosphotransfer kinase activity"/>
    <property type="evidence" value="ECO:0007669"/>
    <property type="project" value="TreeGrafter"/>
</dbReference>
<dbReference type="GO" id="GO:0000155">
    <property type="term" value="F:phosphorelay sensor kinase activity"/>
    <property type="evidence" value="ECO:0007669"/>
    <property type="project" value="InterPro"/>
</dbReference>
<dbReference type="GO" id="GO:0007623">
    <property type="term" value="P:circadian rhythm"/>
    <property type="evidence" value="ECO:0007669"/>
    <property type="project" value="UniProtKB-UniRule"/>
</dbReference>
<dbReference type="CDD" id="cd00075">
    <property type="entry name" value="HATPase"/>
    <property type="match status" value="1"/>
</dbReference>
<dbReference type="CDD" id="cd00082">
    <property type="entry name" value="HisKA"/>
    <property type="match status" value="1"/>
</dbReference>
<dbReference type="FunFam" id="3.30.565.10:FF:000006">
    <property type="entry name" value="Sensor histidine kinase WalK"/>
    <property type="match status" value="1"/>
</dbReference>
<dbReference type="Gene3D" id="1.10.287.130">
    <property type="match status" value="1"/>
</dbReference>
<dbReference type="Gene3D" id="3.40.30.10">
    <property type="entry name" value="Glutaredoxin"/>
    <property type="match status" value="1"/>
</dbReference>
<dbReference type="Gene3D" id="3.30.565.10">
    <property type="entry name" value="Histidine kinase-like ATPase, C-terminal domain"/>
    <property type="match status" value="1"/>
</dbReference>
<dbReference type="HAMAP" id="MF_01837">
    <property type="entry name" value="Kinase_SasA"/>
    <property type="match status" value="1"/>
</dbReference>
<dbReference type="InterPro" id="IPR036890">
    <property type="entry name" value="HATPase_C_sf"/>
</dbReference>
<dbReference type="InterPro" id="IPR005467">
    <property type="entry name" value="His_kinase_dom"/>
</dbReference>
<dbReference type="InterPro" id="IPR003661">
    <property type="entry name" value="HisK_dim/P_dom"/>
</dbReference>
<dbReference type="InterPro" id="IPR036097">
    <property type="entry name" value="HisK_dim/P_sf"/>
</dbReference>
<dbReference type="InterPro" id="IPR011649">
    <property type="entry name" value="KaiB_domain"/>
</dbReference>
<dbReference type="InterPro" id="IPR023527">
    <property type="entry name" value="Kinase_SasA"/>
</dbReference>
<dbReference type="InterPro" id="IPR004358">
    <property type="entry name" value="Sig_transdc_His_kin-like_C"/>
</dbReference>
<dbReference type="InterPro" id="IPR036249">
    <property type="entry name" value="Thioredoxin-like_sf"/>
</dbReference>
<dbReference type="NCBIfam" id="NF006800">
    <property type="entry name" value="PRK09303.1"/>
    <property type="match status" value="1"/>
</dbReference>
<dbReference type="PANTHER" id="PTHR43047:SF72">
    <property type="entry name" value="OSMOSENSING HISTIDINE PROTEIN KINASE SLN1"/>
    <property type="match status" value="1"/>
</dbReference>
<dbReference type="PANTHER" id="PTHR43047">
    <property type="entry name" value="TWO-COMPONENT HISTIDINE PROTEIN KINASE"/>
    <property type="match status" value="1"/>
</dbReference>
<dbReference type="Pfam" id="PF02518">
    <property type="entry name" value="HATPase_c"/>
    <property type="match status" value="1"/>
</dbReference>
<dbReference type="Pfam" id="PF00512">
    <property type="entry name" value="HisKA"/>
    <property type="match status" value="1"/>
</dbReference>
<dbReference type="Pfam" id="PF07689">
    <property type="entry name" value="KaiB"/>
    <property type="match status" value="1"/>
</dbReference>
<dbReference type="PRINTS" id="PR00344">
    <property type="entry name" value="BCTRLSENSOR"/>
</dbReference>
<dbReference type="SMART" id="SM00387">
    <property type="entry name" value="HATPase_c"/>
    <property type="match status" value="1"/>
</dbReference>
<dbReference type="SMART" id="SM01248">
    <property type="entry name" value="KaiB"/>
    <property type="match status" value="1"/>
</dbReference>
<dbReference type="SUPFAM" id="SSF55874">
    <property type="entry name" value="ATPase domain of HSP90 chaperone/DNA topoisomerase II/histidine kinase"/>
    <property type="match status" value="1"/>
</dbReference>
<dbReference type="SUPFAM" id="SSF47384">
    <property type="entry name" value="Homodimeric domain of signal transducing histidine kinase"/>
    <property type="match status" value="1"/>
</dbReference>
<dbReference type="SUPFAM" id="SSF52833">
    <property type="entry name" value="Thioredoxin-like"/>
    <property type="match status" value="1"/>
</dbReference>
<dbReference type="PROSITE" id="PS50109">
    <property type="entry name" value="HIS_KIN"/>
    <property type="match status" value="1"/>
</dbReference>
<comment type="function">
    <text evidence="1">Member of the two-component regulatory system SasA/RpaA involved in genome-wide circadian gene expression. One of several clock output pathways. Participates in the Kai clock protein complex, the main circadian regulator in cyanobacteria, via its interaction with KaiC. KaiC enhances the autophosphorylation activity of SasA, which then transfers its phosphate group to RpaA to activate it. In addition to its output function, recruits fold-shifted KaiB (KaiB(fs)) to KaiC to cooperatively form the KaiB(6):KaiC(6) complex (independent of SasA kinase activity). Required for robustness of the circadian rhythm of gene expression and is involved in clock output, also required for adaptation to light/dark cycles.</text>
</comment>
<comment type="catalytic activity">
    <reaction evidence="1">
        <text>ATP + protein L-histidine = ADP + protein N-phospho-L-histidine.</text>
        <dbReference type="EC" id="2.7.13.3"/>
    </reaction>
</comment>
<comment type="subunit">
    <text evidence="1">Homooligomerizes. Interacts with KaiC. Participates in the KaiBC complex, whose core is composed of a KaiC homohexamer and 6 KaiB.</text>
</comment>
<comment type="domain">
    <text evidence="1">The N-terminus interacts with KaiC, while the C-terminal histidine kinase domain autophosphorylates and is probably responsible for self-oligomerization. The N-terminal domain stimulates the C-terminus to autophosphorylate.</text>
</comment>
<proteinExistence type="inferred from homology"/>
<protein>
    <recommendedName>
        <fullName evidence="1">Adaptive-response sensory kinase SasA</fullName>
        <ecNumber evidence="1">2.7.13.3</ecNumber>
    </recommendedName>
    <alternativeName>
        <fullName evidence="1">Sensor histidine kinase SasA</fullName>
    </alternativeName>
</protein>
<keyword id="KW-0067">ATP-binding</keyword>
<keyword id="KW-0090">Biological rhythms</keyword>
<keyword id="KW-0418">Kinase</keyword>
<keyword id="KW-0547">Nucleotide-binding</keyword>
<keyword id="KW-0597">Phosphoprotein</keyword>
<keyword id="KW-1185">Reference proteome</keyword>
<keyword id="KW-0808">Transferase</keyword>
<keyword id="KW-0902">Two-component regulatory system</keyword>
<accession>Q7BWI3</accession>
<accession>Q9L439</accession>
<feature type="chain" id="PRO_0000074868" description="Adaptive-response sensory kinase SasA">
    <location>
        <begin position="1"/>
        <end position="381"/>
    </location>
</feature>
<feature type="domain" description="Histidine kinase" evidence="1">
    <location>
        <begin position="154"/>
        <end position="367"/>
    </location>
</feature>
<feature type="modified residue" description="Phosphohistidine; by autocatalysis" evidence="1">
    <location>
        <position position="157"/>
    </location>
</feature>
<organism>
    <name type="scientific">Prochlorococcus marinus (strain SARG / CCMP1375 / SS120)</name>
    <dbReference type="NCBI Taxonomy" id="167539"/>
    <lineage>
        <taxon>Bacteria</taxon>
        <taxon>Bacillati</taxon>
        <taxon>Cyanobacteriota</taxon>
        <taxon>Cyanophyceae</taxon>
        <taxon>Synechococcales</taxon>
        <taxon>Prochlorococcaceae</taxon>
        <taxon>Prochlorococcus</taxon>
    </lineage>
</organism>